<comment type="function">
    <text evidence="1">Peptide chain release factor 2 directs the termination of translation in response to the peptide chain termination codons UGA and UAA.</text>
</comment>
<comment type="subcellular location">
    <subcellularLocation>
        <location evidence="1">Cytoplasm</location>
    </subcellularLocation>
</comment>
<comment type="PTM">
    <text evidence="1">Methylated by PrmC. Methylation increases the termination efficiency of RF2.</text>
</comment>
<comment type="similarity">
    <text evidence="1">Belongs to the prokaryotic/mitochondrial release factor family.</text>
</comment>
<organism>
    <name type="scientific">Acidithiobacillus ferrooxidans (strain ATCC 23270 / DSM 14882 / CIP 104768 / NCIMB 8455)</name>
    <name type="common">Ferrobacillus ferrooxidans (strain ATCC 23270)</name>
    <dbReference type="NCBI Taxonomy" id="243159"/>
    <lineage>
        <taxon>Bacteria</taxon>
        <taxon>Pseudomonadati</taxon>
        <taxon>Pseudomonadota</taxon>
        <taxon>Acidithiobacillia</taxon>
        <taxon>Acidithiobacillales</taxon>
        <taxon>Acidithiobacillaceae</taxon>
        <taxon>Acidithiobacillus</taxon>
    </lineage>
</organism>
<evidence type="ECO:0000255" key="1">
    <source>
        <dbReference type="HAMAP-Rule" id="MF_00094"/>
    </source>
</evidence>
<protein>
    <recommendedName>
        <fullName evidence="1">Peptide chain release factor 2</fullName>
        <shortName evidence="1">RF-2</shortName>
    </recommendedName>
</protein>
<accession>B7J4M2</accession>
<gene>
    <name evidence="1" type="primary">prfB</name>
    <name type="ordered locus">AFE_0479</name>
</gene>
<proteinExistence type="inferred from homology"/>
<dbReference type="EMBL" id="CP001219">
    <property type="protein sequence ID" value="ACK79718.1"/>
    <property type="molecule type" value="Genomic_DNA"/>
</dbReference>
<dbReference type="SMR" id="B7J4M2"/>
<dbReference type="STRING" id="243159.AFE_0479"/>
<dbReference type="PaxDb" id="243159-AFE_0479"/>
<dbReference type="KEGG" id="afr:AFE_0479"/>
<dbReference type="eggNOG" id="COG1186">
    <property type="taxonomic scope" value="Bacteria"/>
</dbReference>
<dbReference type="HOGENOM" id="CLU_3418673_0_0_6"/>
<dbReference type="Proteomes" id="UP000001362">
    <property type="component" value="Chromosome"/>
</dbReference>
<dbReference type="GO" id="GO:0005737">
    <property type="term" value="C:cytoplasm"/>
    <property type="evidence" value="ECO:0007669"/>
    <property type="project" value="UniProtKB-SubCell"/>
</dbReference>
<dbReference type="GO" id="GO:0016149">
    <property type="term" value="F:translation release factor activity, codon specific"/>
    <property type="evidence" value="ECO:0007669"/>
    <property type="project" value="UniProtKB-UniRule"/>
</dbReference>
<dbReference type="FunFam" id="3.30.160.20:FF:000010">
    <property type="entry name" value="Peptide chain release factor 2"/>
    <property type="match status" value="1"/>
</dbReference>
<dbReference type="Gene3D" id="3.30.160.20">
    <property type="match status" value="1"/>
</dbReference>
<dbReference type="Gene3D" id="3.30.70.1660">
    <property type="match status" value="1"/>
</dbReference>
<dbReference type="Gene3D" id="1.20.58.410">
    <property type="entry name" value="Release factor"/>
    <property type="match status" value="1"/>
</dbReference>
<dbReference type="HAMAP" id="MF_00094">
    <property type="entry name" value="Rel_fac_2"/>
    <property type="match status" value="1"/>
</dbReference>
<dbReference type="InterPro" id="IPR005139">
    <property type="entry name" value="PCRF"/>
</dbReference>
<dbReference type="InterPro" id="IPR000352">
    <property type="entry name" value="Pep_chain_release_fac_I"/>
</dbReference>
<dbReference type="InterPro" id="IPR045853">
    <property type="entry name" value="Pep_chain_release_fac_I_sf"/>
</dbReference>
<dbReference type="InterPro" id="IPR004374">
    <property type="entry name" value="PrfB"/>
</dbReference>
<dbReference type="NCBIfam" id="TIGR00020">
    <property type="entry name" value="prfB"/>
    <property type="match status" value="1"/>
</dbReference>
<dbReference type="PANTHER" id="PTHR43116:SF3">
    <property type="entry name" value="CLASS I PEPTIDE CHAIN RELEASE FACTOR"/>
    <property type="match status" value="1"/>
</dbReference>
<dbReference type="PANTHER" id="PTHR43116">
    <property type="entry name" value="PEPTIDE CHAIN RELEASE FACTOR 2"/>
    <property type="match status" value="1"/>
</dbReference>
<dbReference type="Pfam" id="PF03462">
    <property type="entry name" value="PCRF"/>
    <property type="match status" value="1"/>
</dbReference>
<dbReference type="Pfam" id="PF00472">
    <property type="entry name" value="RF-1"/>
    <property type="match status" value="1"/>
</dbReference>
<dbReference type="SMART" id="SM00937">
    <property type="entry name" value="PCRF"/>
    <property type="match status" value="1"/>
</dbReference>
<dbReference type="SUPFAM" id="SSF75620">
    <property type="entry name" value="Release factor"/>
    <property type="match status" value="1"/>
</dbReference>
<dbReference type="PROSITE" id="PS00745">
    <property type="entry name" value="RF_PROK_I"/>
    <property type="match status" value="1"/>
</dbReference>
<reference key="1">
    <citation type="journal article" date="2008" name="BMC Genomics">
        <title>Acidithiobacillus ferrooxidans metabolism: from genome sequence to industrial applications.</title>
        <authorList>
            <person name="Valdes J."/>
            <person name="Pedroso I."/>
            <person name="Quatrini R."/>
            <person name="Dodson R.J."/>
            <person name="Tettelin H."/>
            <person name="Blake R. II"/>
            <person name="Eisen J.A."/>
            <person name="Holmes D.S."/>
        </authorList>
    </citation>
    <scope>NUCLEOTIDE SEQUENCE [LARGE SCALE GENOMIC DNA]</scope>
    <source>
        <strain>ATCC 23270 / DSM 14882 / CIP 104768 / NCIMB 8455</strain>
    </source>
</reference>
<sequence>MREVNEMRALHDDLQVRVAGLRGYLDLEEKRGRLEEVQRELEDPTIWNNAEKAQELGRERSALEAVITPMDKLTASLADGGEMLELALSEQDAELLAAVDADLDTALSLVEKLEFQRMFSGAQDAANCFVDIQAGAGGTEAQDWAEMILRMYLHWAESHGFAAELVEVSEGEVAGIKSASIHVRGDHAFGWLRTETGVHRLVRKSPFDSGNRRHTSFASVFVYPEIDDSFEVDINPADLKVDTYRASGAGGQHVNKTDSAIRITHVPSGIVVACQTDRSQHKNRAEAMRMLRSKLYEMEMQKRAVEKQALEDSKSDIGWGHQIRSYVLDQSRIKDLRTGVEVGDTQKVLDGALDMFIEAALKAGL</sequence>
<feature type="chain" id="PRO_1000117256" description="Peptide chain release factor 2">
    <location>
        <begin position="1"/>
        <end position="365"/>
    </location>
</feature>
<feature type="modified residue" description="N5-methylglutamine" evidence="1">
    <location>
        <position position="252"/>
    </location>
</feature>
<name>RF2_ACIF2</name>
<keyword id="KW-0963">Cytoplasm</keyword>
<keyword id="KW-0488">Methylation</keyword>
<keyword id="KW-0648">Protein biosynthesis</keyword>
<keyword id="KW-1185">Reference proteome</keyword>